<evidence type="ECO:0000269" key="1">
    <source>
    </source>
</evidence>
<evidence type="ECO:0000305" key="2"/>
<evidence type="ECO:0007829" key="3">
    <source>
        <dbReference type="PDB" id="1GEG"/>
    </source>
</evidence>
<evidence type="ECO:0007829" key="4">
    <source>
        <dbReference type="PDB" id="3WYE"/>
    </source>
</evidence>
<feature type="chain" id="PRO_0000054537" description="Diacetyl reductase [(S)-acetoin forming]">
    <location>
        <begin position="1"/>
        <end position="256"/>
    </location>
</feature>
<feature type="active site" description="Proton acceptor">
    <location>
        <position position="152"/>
    </location>
</feature>
<feature type="binding site" evidence="1">
    <location>
        <begin position="6"/>
        <end position="33"/>
    </location>
    <ligand>
        <name>NAD(+)</name>
        <dbReference type="ChEBI" id="CHEBI:57540"/>
    </ligand>
</feature>
<feature type="binding site" evidence="1">
    <location>
        <position position="59"/>
    </location>
    <ligand>
        <name>NAD(+)</name>
        <dbReference type="ChEBI" id="CHEBI:57540"/>
    </ligand>
</feature>
<feature type="binding site">
    <location>
        <position position="139"/>
    </location>
    <ligand>
        <name>substrate</name>
    </ligand>
</feature>
<feature type="binding site" evidence="1">
    <location>
        <position position="156"/>
    </location>
    <ligand>
        <name>NAD(+)</name>
        <dbReference type="ChEBI" id="CHEBI:57540"/>
    </ligand>
</feature>
<feature type="sequence conflict" description="In Ref. 1; BAA13085." evidence="2" ref="1">
    <original>RAM</original>
    <variation>HAV</variation>
    <location>
        <begin position="52"/>
        <end position="54"/>
    </location>
</feature>
<feature type="strand" evidence="4">
    <location>
        <begin position="4"/>
        <end position="8"/>
    </location>
</feature>
<feature type="turn" evidence="4">
    <location>
        <begin position="9"/>
        <end position="11"/>
    </location>
</feature>
<feature type="helix" evidence="4">
    <location>
        <begin position="13"/>
        <end position="25"/>
    </location>
</feature>
<feature type="strand" evidence="4">
    <location>
        <begin position="28"/>
        <end position="34"/>
    </location>
</feature>
<feature type="helix" evidence="4">
    <location>
        <begin position="36"/>
        <end position="47"/>
    </location>
</feature>
<feature type="turn" evidence="4">
    <location>
        <begin position="48"/>
        <end position="50"/>
    </location>
</feature>
<feature type="strand" evidence="4">
    <location>
        <begin position="55"/>
        <end position="57"/>
    </location>
</feature>
<feature type="helix" evidence="4">
    <location>
        <begin position="63"/>
        <end position="77"/>
    </location>
</feature>
<feature type="strand" evidence="4">
    <location>
        <begin position="82"/>
        <end position="85"/>
    </location>
</feature>
<feature type="helix" evidence="3">
    <location>
        <begin position="95"/>
        <end position="97"/>
    </location>
</feature>
<feature type="helix" evidence="3">
    <location>
        <begin position="100"/>
        <end position="110"/>
    </location>
</feature>
<feature type="helix" evidence="4">
    <location>
        <begin position="122"/>
        <end position="128"/>
    </location>
</feature>
<feature type="strand" evidence="4">
    <location>
        <begin position="132"/>
        <end position="137"/>
    </location>
</feature>
<feature type="helix" evidence="3">
    <location>
        <begin position="140"/>
        <end position="142"/>
    </location>
</feature>
<feature type="helix" evidence="4">
    <location>
        <begin position="165"/>
        <end position="170"/>
    </location>
</feature>
<feature type="helix" evidence="4">
    <location>
        <begin position="171"/>
        <end position="173"/>
    </location>
</feature>
<feature type="strand" evidence="4">
    <location>
        <begin position="175"/>
        <end position="182"/>
    </location>
</feature>
<feature type="strand" evidence="3">
    <location>
        <begin position="184"/>
        <end position="187"/>
    </location>
</feature>
<feature type="helix" evidence="3">
    <location>
        <begin position="188"/>
        <end position="201"/>
    </location>
</feature>
<feature type="helix" evidence="3">
    <location>
        <begin position="207"/>
        <end position="213"/>
    </location>
</feature>
<feature type="helix" evidence="3">
    <location>
        <begin position="224"/>
        <end position="235"/>
    </location>
</feature>
<feature type="helix" evidence="4">
    <location>
        <begin position="237"/>
        <end position="239"/>
    </location>
</feature>
<feature type="strand" evidence="4">
    <location>
        <begin position="246"/>
        <end position="254"/>
    </location>
</feature>
<accession>Q48436</accession>
<accession>Q9R878</accession>
<proteinExistence type="evidence at protein level"/>
<comment type="function">
    <text>Catalyzes the reversible reduction of (S)-acetoin to 2,3-butanediol in the presence of NADH.</text>
</comment>
<comment type="catalytic activity">
    <reaction>
        <text>(S)-acetoin + NAD(+) = diacetyl + NADH + H(+)</text>
        <dbReference type="Rhea" id="RHEA:27286"/>
        <dbReference type="ChEBI" id="CHEBI:15378"/>
        <dbReference type="ChEBI" id="CHEBI:15687"/>
        <dbReference type="ChEBI" id="CHEBI:16583"/>
        <dbReference type="ChEBI" id="CHEBI:57540"/>
        <dbReference type="ChEBI" id="CHEBI:57945"/>
        <dbReference type="EC" id="1.1.1.304"/>
    </reaction>
</comment>
<comment type="subunit">
    <text evidence="1">Homotetramer.</text>
</comment>
<comment type="similarity">
    <text evidence="2">Belongs to the short-chain dehydrogenases/reductases (SDR) family.</text>
</comment>
<gene>
    <name type="primary">budC</name>
</gene>
<protein>
    <recommendedName>
        <fullName>Diacetyl reductase [(S)-acetoin forming]</fullName>
        <ecNumber>1.1.1.304</ecNumber>
    </recommendedName>
    <alternativeName>
        <fullName>Acetoin(diacetyl) reductase</fullName>
        <shortName>AR</shortName>
    </alternativeName>
    <alternativeName>
        <fullName>Meso-2,3-butanediol dehydrogenase</fullName>
    </alternativeName>
</protein>
<dbReference type="EC" id="1.1.1.304"/>
<dbReference type="EMBL" id="D86412">
    <property type="protein sequence ID" value="BAA13085.1"/>
    <property type="molecule type" value="Genomic_DNA"/>
</dbReference>
<dbReference type="EMBL" id="AF098800">
    <property type="protein sequence ID" value="AAC78679.1"/>
    <property type="molecule type" value="Genomic_DNA"/>
</dbReference>
<dbReference type="RefSeq" id="WP_004151179.1">
    <property type="nucleotide sequence ID" value="NZ_WYAM01000009.1"/>
</dbReference>
<dbReference type="PDB" id="1GEG">
    <property type="method" value="X-ray"/>
    <property type="resolution" value="1.70 A"/>
    <property type="chains" value="A/B/C/D/E/F/G/H=1-256"/>
</dbReference>
<dbReference type="PDB" id="3WYE">
    <property type="method" value="X-ray"/>
    <property type="resolution" value="1.58 A"/>
    <property type="chains" value="A/B=1-83, A/B=119-134, A/B=162-181, A/B=237-256"/>
</dbReference>
<dbReference type="PDBsum" id="1GEG"/>
<dbReference type="PDBsum" id="3WYE"/>
<dbReference type="SMR" id="Q48436"/>
<dbReference type="DrugBank" id="DB02379">
    <property type="generic name" value="Beta-D-Glucose"/>
</dbReference>
<dbReference type="BioCyc" id="MetaCyc:MONOMER-8762"/>
<dbReference type="BRENDA" id="1.1.1.304">
    <property type="organism ID" value="2814"/>
</dbReference>
<dbReference type="BRENDA" id="1.1.1.76">
    <property type="organism ID" value="2814"/>
</dbReference>
<dbReference type="BRENDA" id="1.1.1.B20">
    <property type="organism ID" value="2814"/>
</dbReference>
<dbReference type="EvolutionaryTrace" id="Q48436"/>
<dbReference type="GO" id="GO:0052588">
    <property type="term" value="F:diacetyl reductase ((S)-acetoin forming) (NAD+) activity"/>
    <property type="evidence" value="ECO:0007669"/>
    <property type="project" value="UniProtKB-EC"/>
</dbReference>
<dbReference type="GO" id="GO:0045150">
    <property type="term" value="P:acetoin catabolic process"/>
    <property type="evidence" value="ECO:0007669"/>
    <property type="project" value="InterPro"/>
</dbReference>
<dbReference type="CDD" id="cd05366">
    <property type="entry name" value="meso-BDH-like_SDR_c"/>
    <property type="match status" value="1"/>
</dbReference>
<dbReference type="FunFam" id="3.40.50.720:FF:000084">
    <property type="entry name" value="Short-chain dehydrogenase reductase"/>
    <property type="match status" value="1"/>
</dbReference>
<dbReference type="Gene3D" id="3.40.50.720">
    <property type="entry name" value="NAD(P)-binding Rossmann-like Domain"/>
    <property type="match status" value="1"/>
</dbReference>
<dbReference type="InterPro" id="IPR014007">
    <property type="entry name" value="23BDH"/>
</dbReference>
<dbReference type="InterPro" id="IPR036291">
    <property type="entry name" value="NAD(P)-bd_dom_sf"/>
</dbReference>
<dbReference type="InterPro" id="IPR020904">
    <property type="entry name" value="Sc_DH/Rdtase_CS"/>
</dbReference>
<dbReference type="InterPro" id="IPR002347">
    <property type="entry name" value="SDR_fam"/>
</dbReference>
<dbReference type="NCBIfam" id="TIGR02415">
    <property type="entry name" value="23BDH"/>
    <property type="match status" value="1"/>
</dbReference>
<dbReference type="NCBIfam" id="NF005559">
    <property type="entry name" value="PRK07231.1"/>
    <property type="match status" value="1"/>
</dbReference>
<dbReference type="NCBIfam" id="NF006394">
    <property type="entry name" value="PRK08643.1"/>
    <property type="match status" value="1"/>
</dbReference>
<dbReference type="PANTHER" id="PTHR24321">
    <property type="entry name" value="DEHYDROGENASES, SHORT CHAIN"/>
    <property type="match status" value="1"/>
</dbReference>
<dbReference type="PANTHER" id="PTHR24321:SF8">
    <property type="entry name" value="ESTRADIOL 17-BETA-DEHYDROGENASE 8-RELATED"/>
    <property type="match status" value="1"/>
</dbReference>
<dbReference type="Pfam" id="PF00106">
    <property type="entry name" value="adh_short"/>
    <property type="match status" value="1"/>
</dbReference>
<dbReference type="PRINTS" id="PR00081">
    <property type="entry name" value="GDHRDH"/>
</dbReference>
<dbReference type="PRINTS" id="PR00080">
    <property type="entry name" value="SDRFAMILY"/>
</dbReference>
<dbReference type="SMART" id="SM00822">
    <property type="entry name" value="PKS_KR"/>
    <property type="match status" value="1"/>
</dbReference>
<dbReference type="SUPFAM" id="SSF51735">
    <property type="entry name" value="NAD(P)-binding Rossmann-fold domains"/>
    <property type="match status" value="1"/>
</dbReference>
<dbReference type="PROSITE" id="PS00061">
    <property type="entry name" value="ADH_SHORT"/>
    <property type="match status" value="1"/>
</dbReference>
<sequence>MKKVALVTGAGQGIGKAIALRLVKDGFAVAIADYNDATAKAVASEINQAGGRAMAVKVDVSDRDQVFAAVEQARKTLGGFDVIVNNAGVAPSTPIESITPEIVDKVYNINVKGVIWGIQAAVEAFKKEGHGGKIINACSQAGHVGNPELAVYSSSKFAVRGLTQTAARDLAPLGITVNGYCPGIVKTPMWAEIDRQVSEAAGKPLGYGTAEFAKRITLGRLSEPEDVAACVSYLASPDSDYMTGQSLLIDGGMVFN</sequence>
<organism>
    <name type="scientific">Klebsiella pneumoniae</name>
    <dbReference type="NCBI Taxonomy" id="573"/>
    <lineage>
        <taxon>Bacteria</taxon>
        <taxon>Pseudomonadati</taxon>
        <taxon>Pseudomonadota</taxon>
        <taxon>Gammaproteobacteria</taxon>
        <taxon>Enterobacterales</taxon>
        <taxon>Enterobacteriaceae</taxon>
        <taxon>Klebsiella/Raoultella group</taxon>
        <taxon>Klebsiella</taxon>
        <taxon>Klebsiella pneumoniae complex</taxon>
    </lineage>
</organism>
<name>BUDC_KLEPN</name>
<keyword id="KW-0002">3D-structure</keyword>
<keyword id="KW-0520">NAD</keyword>
<keyword id="KW-0560">Oxidoreductase</keyword>
<reference key="1">
    <citation type="submission" date="1996-07" db="EMBL/GenBank/DDBJ databases">
        <authorList>
            <person name="Ui S."/>
        </authorList>
    </citation>
    <scope>NUCLEOTIDE SEQUENCE [GENOMIC DNA]</scope>
    <source>
        <strain>ATCC 8308 / JCM 20034 / IAM 1063 / NBRC 3319 / NCIMB 815</strain>
    </source>
</reference>
<reference key="2">
    <citation type="journal article" date="2001" name="J. Ind. Microbiol. Biotechnol.">
        <title>Expression of the Klebsiella pneumoniae CG21 acetoin reductase gene in Clostridium acetobutylicum ATCC 824.</title>
        <authorList>
            <person name="Wardwell S.A."/>
            <person name="Yang Y.T."/>
            <person name="Chang H.-Y."/>
            <person name="San K.Y."/>
            <person name="Rudolph F.B."/>
            <person name="Bennett G.N."/>
        </authorList>
    </citation>
    <scope>NUCLEOTIDE SEQUENCE [GENOMIC DNA]</scope>
    <source>
        <strain>CG21</strain>
    </source>
</reference>
<reference key="3">
    <citation type="journal article" date="2001" name="J. Biochem.">
        <title>Crystal structure of meso-2,3-butanediol dehydrogenase in a complex with NAD+ and inhibitor mercaptoethanol at 1.7 A resolution for understanding of chiral substrate recognition mechanisms.</title>
        <authorList>
            <person name="Otagiri M."/>
            <person name="Kurisu G."/>
            <person name="Ui S."/>
            <person name="Takusagawa Y."/>
            <person name="Ohkuma M."/>
            <person name="Kudo T."/>
            <person name="Kusunoki M."/>
        </authorList>
    </citation>
    <scope>X-RAY CRYSTALLOGRAPHY (1.7 ANGSTROMS) IN COMPLEX WITH NAD AND SUBSTRATE ANALOG</scope>
</reference>